<feature type="chain" id="PRO_0000158516" description="Ribose-5-phosphate isomerase A">
    <location>
        <begin position="1"/>
        <end position="229"/>
    </location>
</feature>
<feature type="active site" description="Proton acceptor" evidence="1">
    <location>
        <position position="107"/>
    </location>
</feature>
<feature type="binding site" evidence="1">
    <location>
        <begin position="28"/>
        <end position="31"/>
    </location>
    <ligand>
        <name>substrate</name>
    </ligand>
</feature>
<feature type="binding site" evidence="1">
    <location>
        <begin position="85"/>
        <end position="88"/>
    </location>
    <ligand>
        <name>substrate</name>
    </ligand>
</feature>
<feature type="binding site" evidence="1">
    <location>
        <begin position="98"/>
        <end position="101"/>
    </location>
    <ligand>
        <name>substrate</name>
    </ligand>
</feature>
<feature type="binding site" evidence="1">
    <location>
        <position position="125"/>
    </location>
    <ligand>
        <name>substrate</name>
    </ligand>
</feature>
<name>RPIA_PYRFU</name>
<gene>
    <name evidence="1" type="primary">rpiA</name>
    <name type="ordered locus">PF1258</name>
</gene>
<protein>
    <recommendedName>
        <fullName evidence="1">Ribose-5-phosphate isomerase A</fullName>
        <ecNumber evidence="1">5.3.1.6</ecNumber>
    </recommendedName>
    <alternativeName>
        <fullName evidence="1">Phosphoriboisomerase A</fullName>
        <shortName evidence="1">PRI</shortName>
    </alternativeName>
</protein>
<comment type="function">
    <text evidence="1">Catalyzes the reversible conversion of ribose-5-phosphate to ribulose 5-phosphate.</text>
</comment>
<comment type="catalytic activity">
    <reaction evidence="1">
        <text>aldehydo-D-ribose 5-phosphate = D-ribulose 5-phosphate</text>
        <dbReference type="Rhea" id="RHEA:14657"/>
        <dbReference type="ChEBI" id="CHEBI:58121"/>
        <dbReference type="ChEBI" id="CHEBI:58273"/>
        <dbReference type="EC" id="5.3.1.6"/>
    </reaction>
</comment>
<comment type="pathway">
    <text evidence="1">Carbohydrate degradation; pentose phosphate pathway; D-ribose 5-phosphate from D-ribulose 5-phosphate (non-oxidative stage): step 1/1.</text>
</comment>
<comment type="subunit">
    <text evidence="1">Homodimer.</text>
</comment>
<comment type="similarity">
    <text evidence="1">Belongs to the ribose 5-phosphate isomerase family.</text>
</comment>
<evidence type="ECO:0000255" key="1">
    <source>
        <dbReference type="HAMAP-Rule" id="MF_00170"/>
    </source>
</evidence>
<proteinExistence type="inferred from homology"/>
<reference key="1">
    <citation type="journal article" date="1999" name="Genetics">
        <title>Divergence of the hyperthermophilic archaea Pyrococcus furiosus and P. horikoshii inferred from complete genomic sequences.</title>
        <authorList>
            <person name="Maeder D.L."/>
            <person name="Weiss R.B."/>
            <person name="Dunn D.M."/>
            <person name="Cherry J.L."/>
            <person name="Gonzalez J.M."/>
            <person name="DiRuggiero J."/>
            <person name="Robb F.T."/>
        </authorList>
    </citation>
    <scope>NUCLEOTIDE SEQUENCE [LARGE SCALE GENOMIC DNA]</scope>
    <source>
        <strain>ATCC 43587 / DSM 3638 / JCM 8422 / Vc1</strain>
    </source>
</reference>
<accession>Q8U1F0</accession>
<keyword id="KW-0413">Isomerase</keyword>
<keyword id="KW-1185">Reference proteome</keyword>
<sequence>MNVEEMKKAVARAALEFIEDDMVVGLGTGSTTAYFIRYLGEMIEKGKVEDIYGVPPPIKQKFLRMESGVPVLSLDQVDAIDIAVDGADEVDPNLNLIKGRGAALTMEKIIEYRAGTFIVLVDESKLVDYLCQKMPVPIEVIPAAWKAILEELSIFNAKAELRMGVKKDGPVVTENGNFIIDAKFPRIDDPLDMEIELNTIPGVVENGIFADIADIVLVGTKEGVKRLER</sequence>
<dbReference type="EC" id="5.3.1.6" evidence="1"/>
<dbReference type="EMBL" id="AE009950">
    <property type="protein sequence ID" value="AAL81382.1"/>
    <property type="molecule type" value="Genomic_DNA"/>
</dbReference>
<dbReference type="RefSeq" id="WP_011012402.1">
    <property type="nucleotide sequence ID" value="NC_003413.1"/>
</dbReference>
<dbReference type="SMR" id="Q8U1F0"/>
<dbReference type="STRING" id="186497.PF1258"/>
<dbReference type="PaxDb" id="186497-PF1258"/>
<dbReference type="GeneID" id="1469131"/>
<dbReference type="KEGG" id="pfu:PF1258"/>
<dbReference type="PATRIC" id="fig|186497.12.peg.1320"/>
<dbReference type="eggNOG" id="arCOG01122">
    <property type="taxonomic scope" value="Archaea"/>
</dbReference>
<dbReference type="HOGENOM" id="CLU_056590_1_1_2"/>
<dbReference type="OrthoDB" id="19013at2157"/>
<dbReference type="PhylomeDB" id="Q8U1F0"/>
<dbReference type="UniPathway" id="UPA00115">
    <property type="reaction ID" value="UER00412"/>
</dbReference>
<dbReference type="Proteomes" id="UP000001013">
    <property type="component" value="Chromosome"/>
</dbReference>
<dbReference type="GO" id="GO:0005829">
    <property type="term" value="C:cytosol"/>
    <property type="evidence" value="ECO:0007669"/>
    <property type="project" value="TreeGrafter"/>
</dbReference>
<dbReference type="GO" id="GO:0004751">
    <property type="term" value="F:ribose-5-phosphate isomerase activity"/>
    <property type="evidence" value="ECO:0007669"/>
    <property type="project" value="UniProtKB-UniRule"/>
</dbReference>
<dbReference type="GO" id="GO:0006014">
    <property type="term" value="P:D-ribose metabolic process"/>
    <property type="evidence" value="ECO:0007669"/>
    <property type="project" value="TreeGrafter"/>
</dbReference>
<dbReference type="GO" id="GO:0009052">
    <property type="term" value="P:pentose-phosphate shunt, non-oxidative branch"/>
    <property type="evidence" value="ECO:0007669"/>
    <property type="project" value="UniProtKB-UniRule"/>
</dbReference>
<dbReference type="CDD" id="cd01398">
    <property type="entry name" value="RPI_A"/>
    <property type="match status" value="1"/>
</dbReference>
<dbReference type="FunFam" id="3.30.70.260:FF:000018">
    <property type="entry name" value="Ribose-5-phosphate isomerase A"/>
    <property type="match status" value="1"/>
</dbReference>
<dbReference type="FunFam" id="3.40.50.1360:FF:000001">
    <property type="entry name" value="Ribose-5-phosphate isomerase A"/>
    <property type="match status" value="1"/>
</dbReference>
<dbReference type="Gene3D" id="3.30.70.260">
    <property type="match status" value="1"/>
</dbReference>
<dbReference type="Gene3D" id="3.40.50.1360">
    <property type="match status" value="1"/>
</dbReference>
<dbReference type="HAMAP" id="MF_00170">
    <property type="entry name" value="Rib_5P_isom_A"/>
    <property type="match status" value="1"/>
</dbReference>
<dbReference type="InterPro" id="IPR037171">
    <property type="entry name" value="NagB/RpiA_transferase-like"/>
</dbReference>
<dbReference type="InterPro" id="IPR020672">
    <property type="entry name" value="Ribose5P_isomerase_typA_subgr"/>
</dbReference>
<dbReference type="InterPro" id="IPR004788">
    <property type="entry name" value="Ribose5P_isomerase_type_A"/>
</dbReference>
<dbReference type="NCBIfam" id="NF001924">
    <property type="entry name" value="PRK00702.1"/>
    <property type="match status" value="1"/>
</dbReference>
<dbReference type="NCBIfam" id="TIGR00021">
    <property type="entry name" value="rpiA"/>
    <property type="match status" value="1"/>
</dbReference>
<dbReference type="PANTHER" id="PTHR11934">
    <property type="entry name" value="RIBOSE-5-PHOSPHATE ISOMERASE"/>
    <property type="match status" value="1"/>
</dbReference>
<dbReference type="PANTHER" id="PTHR11934:SF0">
    <property type="entry name" value="RIBOSE-5-PHOSPHATE ISOMERASE"/>
    <property type="match status" value="1"/>
</dbReference>
<dbReference type="Pfam" id="PF06026">
    <property type="entry name" value="Rib_5-P_isom_A"/>
    <property type="match status" value="1"/>
</dbReference>
<dbReference type="SUPFAM" id="SSF75445">
    <property type="entry name" value="D-ribose-5-phosphate isomerase (RpiA), lid domain"/>
    <property type="match status" value="1"/>
</dbReference>
<dbReference type="SUPFAM" id="SSF100950">
    <property type="entry name" value="NagB/RpiA/CoA transferase-like"/>
    <property type="match status" value="1"/>
</dbReference>
<organism>
    <name type="scientific">Pyrococcus furiosus (strain ATCC 43587 / DSM 3638 / JCM 8422 / Vc1)</name>
    <dbReference type="NCBI Taxonomy" id="186497"/>
    <lineage>
        <taxon>Archaea</taxon>
        <taxon>Methanobacteriati</taxon>
        <taxon>Methanobacteriota</taxon>
        <taxon>Thermococci</taxon>
        <taxon>Thermococcales</taxon>
        <taxon>Thermococcaceae</taxon>
        <taxon>Pyrococcus</taxon>
    </lineage>
</organism>